<sequence length="520" mass="56144">MIARQQCVRGGPRGFSCGSAIVGGGKRGAFSSVSMSGGAGRCSSGGFGSRSLYNLRGNKSISMSVAGSRQGACFGGAGGFGTGGFGGGFGGSFSGKGGPGFPVCPAGGIQEVTINQSLLTPLHVEIDPEIQKVRTEEREQIKLLNNKFASFIDKVQFLEQQNKVLETKWNLLQQQTTTTSSKNLEPLFETYLSVLRKQLDTLGNDKGRLQSELKTMQDSVEDFKTKYEEEINKRTAAENDFVVLKKDVDAAYLNKVELEAKVDSLNDEINFLKVLYDAELSQMQTHVSDTSVVLSMDNNRNLDLDSIIAEVRAQYEEIAQRSKAEAEALYQTKVQQLQISVDQHGDNLKNTKSEIAELNRMIQRLRAEIENIKKQCQTLQVSVADAEQRGENALKDAHSKRVELEAALQQAKEELARMLREYQELMSVKLALDIEIATYRKLLEGEEYRMSGECQSAVSISVVSGSTSTGGISGGLGSGSGFGLSSGFGSGSGSGFGFGGSVSGSSSSKIISTTTLNKRR</sequence>
<protein>
    <recommendedName>
        <fullName>Keratin, type II cytoskeletal 4</fullName>
    </recommendedName>
    <alternativeName>
        <fullName>Cytokeratin-4</fullName>
        <shortName>CK-4</shortName>
    </alternativeName>
    <alternativeName>
        <fullName>Keratin-4</fullName>
        <shortName>K4</shortName>
    </alternativeName>
    <alternativeName>
        <fullName>Type-II keratin Kb4</fullName>
    </alternativeName>
</protein>
<dbReference type="EMBL" id="AY043326">
    <property type="protein sequence ID" value="AAL14196.1"/>
    <property type="molecule type" value="Genomic_DNA"/>
</dbReference>
<dbReference type="EMBL" id="AK299400">
    <property type="protein sequence ID" value="BAG61384.1"/>
    <property type="molecule type" value="mRNA"/>
</dbReference>
<dbReference type="EMBL" id="AC107016">
    <property type="status" value="NOT_ANNOTATED_CDS"/>
    <property type="molecule type" value="Genomic_DNA"/>
</dbReference>
<dbReference type="EMBL" id="BC003630">
    <property type="protein sequence ID" value="AAH03630.2"/>
    <property type="molecule type" value="mRNA"/>
</dbReference>
<dbReference type="EMBL" id="BC042174">
    <property type="protein sequence ID" value="AAH42174.1"/>
    <property type="molecule type" value="mRNA"/>
</dbReference>
<dbReference type="EMBL" id="X67683">
    <property type="protein sequence ID" value="CAA47914.1"/>
    <property type="molecule type" value="mRNA"/>
</dbReference>
<dbReference type="EMBL" id="X07695">
    <property type="protein sequence ID" value="CAA30534.1"/>
    <property type="molecule type" value="mRNA"/>
</dbReference>
<dbReference type="EMBL" id="X61028">
    <property type="protein sequence ID" value="CAA43362.1"/>
    <property type="molecule type" value="Genomic_DNA"/>
</dbReference>
<dbReference type="CCDS" id="CCDS41787.2"/>
<dbReference type="PIR" id="I37942">
    <property type="entry name" value="I37942"/>
</dbReference>
<dbReference type="RefSeq" id="NP_002263.3">
    <property type="nucleotide sequence ID" value="NM_002272.4"/>
</dbReference>
<dbReference type="SMR" id="P19013"/>
<dbReference type="FunCoup" id="P19013">
    <property type="interactions" value="251"/>
</dbReference>
<dbReference type="IntAct" id="P19013">
    <property type="interactions" value="49"/>
</dbReference>
<dbReference type="MINT" id="P19013"/>
<dbReference type="STRING" id="9606.ENSP00000448220"/>
<dbReference type="GlyGen" id="P19013">
    <property type="glycosylation" value="1 site, 1 O-linked glycan (1 site)"/>
</dbReference>
<dbReference type="iPTMnet" id="P19013"/>
<dbReference type="PhosphoSitePlus" id="P19013"/>
<dbReference type="SwissPalm" id="P19013"/>
<dbReference type="BioMuta" id="KRT4"/>
<dbReference type="DMDM" id="82654947"/>
<dbReference type="jPOST" id="P19013"/>
<dbReference type="MassIVE" id="P19013"/>
<dbReference type="PaxDb" id="9606-ENSP00000448220"/>
<dbReference type="PeptideAtlas" id="P19013"/>
<dbReference type="PRIDE" id="P19013"/>
<dbReference type="ProteomicsDB" id="28550"/>
<dbReference type="ProteomicsDB" id="53621"/>
<dbReference type="Antibodypedia" id="3687">
    <property type="antibodies" value="513 antibodies from 38 providers"/>
</dbReference>
<dbReference type="DNASU" id="3851"/>
<dbReference type="Ensembl" id="ENST00000551956.2">
    <property type="protein sequence ID" value="ENSP00000448220.1"/>
    <property type="gene ID" value="ENSG00000170477.13"/>
</dbReference>
<dbReference type="GeneID" id="3851"/>
<dbReference type="KEGG" id="hsa:3851"/>
<dbReference type="MANE-Select" id="ENST00000551956.2">
    <property type="protein sequence ID" value="ENSP00000448220.1"/>
    <property type="RefSeq nucleotide sequence ID" value="NM_002272.4"/>
    <property type="RefSeq protein sequence ID" value="NP_002263.3"/>
</dbReference>
<dbReference type="UCSC" id="uc031qhk.2">
    <property type="organism name" value="human"/>
</dbReference>
<dbReference type="AGR" id="HGNC:6441"/>
<dbReference type="CTD" id="3851"/>
<dbReference type="DisGeNET" id="3851"/>
<dbReference type="GeneCards" id="KRT4"/>
<dbReference type="HGNC" id="HGNC:6441">
    <property type="gene designation" value="KRT4"/>
</dbReference>
<dbReference type="HPA" id="ENSG00000170477">
    <property type="expression patterns" value="Tissue enriched (esophagus)"/>
</dbReference>
<dbReference type="MalaCards" id="KRT4"/>
<dbReference type="MIM" id="123940">
    <property type="type" value="gene"/>
</dbReference>
<dbReference type="MIM" id="193900">
    <property type="type" value="phenotype"/>
</dbReference>
<dbReference type="neXtProt" id="NX_P19013"/>
<dbReference type="OpenTargets" id="ENSG00000170477"/>
<dbReference type="Orphanet" id="171723">
    <property type="disease" value="White sponge nevus"/>
</dbReference>
<dbReference type="PharmGKB" id="PA30229"/>
<dbReference type="VEuPathDB" id="HostDB:ENSG00000170477"/>
<dbReference type="eggNOG" id="ENOG502QURK">
    <property type="taxonomic scope" value="Eukaryota"/>
</dbReference>
<dbReference type="GeneTree" id="ENSGT00940000161550"/>
<dbReference type="HOGENOM" id="CLU_012560_6_1_1"/>
<dbReference type="InParanoid" id="P19013"/>
<dbReference type="OMA" id="LMQDSVE"/>
<dbReference type="OrthoDB" id="9450813at2759"/>
<dbReference type="PAN-GO" id="P19013">
    <property type="GO annotations" value="4 GO annotations based on evolutionary models"/>
</dbReference>
<dbReference type="PhylomeDB" id="P19013"/>
<dbReference type="TreeFam" id="TF317854"/>
<dbReference type="PathwayCommons" id="P19013"/>
<dbReference type="Reactome" id="R-HSA-6805567">
    <property type="pathway name" value="Keratinization"/>
</dbReference>
<dbReference type="Reactome" id="R-HSA-6809371">
    <property type="pathway name" value="Formation of the cornified envelope"/>
</dbReference>
<dbReference type="SignaLink" id="P19013"/>
<dbReference type="SIGNOR" id="P19013"/>
<dbReference type="BioGRID-ORCS" id="3851">
    <property type="hits" value="11 hits in 1144 CRISPR screens"/>
</dbReference>
<dbReference type="ChiTaRS" id="KRT4">
    <property type="organism name" value="human"/>
</dbReference>
<dbReference type="GenomeRNAi" id="3851"/>
<dbReference type="Pharos" id="P19013">
    <property type="development level" value="Tbio"/>
</dbReference>
<dbReference type="PRO" id="PR:P19013"/>
<dbReference type="Proteomes" id="UP000005640">
    <property type="component" value="Chromosome 12"/>
</dbReference>
<dbReference type="RNAct" id="P19013">
    <property type="molecule type" value="protein"/>
</dbReference>
<dbReference type="Bgee" id="ENSG00000170477">
    <property type="expression patterns" value="Expressed in tongue squamous epithelium and 108 other cell types or tissues"/>
</dbReference>
<dbReference type="ExpressionAtlas" id="P19013">
    <property type="expression patterns" value="baseline and differential"/>
</dbReference>
<dbReference type="GO" id="GO:0009986">
    <property type="term" value="C:cell surface"/>
    <property type="evidence" value="ECO:0000314"/>
    <property type="project" value="UniProtKB"/>
</dbReference>
<dbReference type="GO" id="GO:0005829">
    <property type="term" value="C:cytosol"/>
    <property type="evidence" value="ECO:0000304"/>
    <property type="project" value="Reactome"/>
</dbReference>
<dbReference type="GO" id="GO:0005882">
    <property type="term" value="C:intermediate filament"/>
    <property type="evidence" value="ECO:0000303"/>
    <property type="project" value="UniProtKB"/>
</dbReference>
<dbReference type="GO" id="GO:0045111">
    <property type="term" value="C:intermediate filament cytoskeleton"/>
    <property type="evidence" value="ECO:0000314"/>
    <property type="project" value="UniProtKB"/>
</dbReference>
<dbReference type="GO" id="GO:0045095">
    <property type="term" value="C:keratin filament"/>
    <property type="evidence" value="ECO:0000314"/>
    <property type="project" value="UniProtKB"/>
</dbReference>
<dbReference type="GO" id="GO:0005634">
    <property type="term" value="C:nucleus"/>
    <property type="evidence" value="ECO:0007005"/>
    <property type="project" value="UniProtKB"/>
</dbReference>
<dbReference type="GO" id="GO:0030280">
    <property type="term" value="F:structural constituent of skin epidermis"/>
    <property type="evidence" value="ECO:0000318"/>
    <property type="project" value="GO_Central"/>
</dbReference>
<dbReference type="GO" id="GO:0007010">
    <property type="term" value="P:cytoskeleton organization"/>
    <property type="evidence" value="ECO:0000315"/>
    <property type="project" value="UniProtKB"/>
</dbReference>
<dbReference type="GO" id="GO:0030855">
    <property type="term" value="P:epithelial cell differentiation"/>
    <property type="evidence" value="ECO:0000250"/>
    <property type="project" value="UniProtKB"/>
</dbReference>
<dbReference type="GO" id="GO:0045109">
    <property type="term" value="P:intermediate filament organization"/>
    <property type="evidence" value="ECO:0000318"/>
    <property type="project" value="GO_Central"/>
</dbReference>
<dbReference type="GO" id="GO:0031424">
    <property type="term" value="P:keratinization"/>
    <property type="evidence" value="ECO:0000318"/>
    <property type="project" value="GO_Central"/>
</dbReference>
<dbReference type="GO" id="GO:0050680">
    <property type="term" value="P:negative regulation of epithelial cell proliferation"/>
    <property type="evidence" value="ECO:0000250"/>
    <property type="project" value="UniProtKB"/>
</dbReference>
<dbReference type="FunFam" id="1.20.5.1160:FF:000001">
    <property type="entry name" value="Keratin type II"/>
    <property type="match status" value="1"/>
</dbReference>
<dbReference type="FunFam" id="1.20.5.170:FF:000004">
    <property type="entry name" value="Keratin, type II cytoskeletal 5"/>
    <property type="match status" value="1"/>
</dbReference>
<dbReference type="FunFam" id="1.20.5.500:FF:000001">
    <property type="entry name" value="Type II keratin 23"/>
    <property type="match status" value="1"/>
</dbReference>
<dbReference type="Gene3D" id="1.20.5.170">
    <property type="match status" value="1"/>
</dbReference>
<dbReference type="Gene3D" id="1.20.5.500">
    <property type="entry name" value="Single helix bin"/>
    <property type="match status" value="1"/>
</dbReference>
<dbReference type="Gene3D" id="1.20.5.1160">
    <property type="entry name" value="Vasodilator-stimulated phosphoprotein"/>
    <property type="match status" value="1"/>
</dbReference>
<dbReference type="InterPro" id="IPR018039">
    <property type="entry name" value="IF_conserved"/>
</dbReference>
<dbReference type="InterPro" id="IPR039008">
    <property type="entry name" value="IF_rod_dom"/>
</dbReference>
<dbReference type="InterPro" id="IPR032444">
    <property type="entry name" value="Keratin_2_head"/>
</dbReference>
<dbReference type="InterPro" id="IPR003054">
    <property type="entry name" value="Keratin_II"/>
</dbReference>
<dbReference type="PANTHER" id="PTHR45616">
    <property type="entry name" value="GATA-TYPE DOMAIN-CONTAINING PROTEIN"/>
    <property type="match status" value="1"/>
</dbReference>
<dbReference type="PANTHER" id="PTHR45616:SF3">
    <property type="entry name" value="KERATIN, TYPE II CYTOSKELETAL 4"/>
    <property type="match status" value="1"/>
</dbReference>
<dbReference type="Pfam" id="PF00038">
    <property type="entry name" value="Filament"/>
    <property type="match status" value="1"/>
</dbReference>
<dbReference type="Pfam" id="PF16208">
    <property type="entry name" value="Keratin_2_head"/>
    <property type="match status" value="2"/>
</dbReference>
<dbReference type="PRINTS" id="PR01276">
    <property type="entry name" value="TYPE2KERATIN"/>
</dbReference>
<dbReference type="SMART" id="SM01391">
    <property type="entry name" value="Filament"/>
    <property type="match status" value="1"/>
</dbReference>
<dbReference type="SUPFAM" id="SSF64593">
    <property type="entry name" value="Intermediate filament protein, coiled coil region"/>
    <property type="match status" value="3"/>
</dbReference>
<dbReference type="PROSITE" id="PS00226">
    <property type="entry name" value="IF_ROD_1"/>
    <property type="match status" value="1"/>
</dbReference>
<dbReference type="PROSITE" id="PS51842">
    <property type="entry name" value="IF_ROD_2"/>
    <property type="match status" value="1"/>
</dbReference>
<accession>P19013</accession>
<accession>B4DRS2</accession>
<accession>F8VS64</accession>
<accession>Q6GTR8</accession>
<accession>Q96LA7</accession>
<accession>Q9BTL1</accession>
<gene>
    <name type="primary">KRT4</name>
    <name type="synonym">CYK4</name>
</gene>
<proteinExistence type="evidence at protein level"/>
<comment type="subunit">
    <text>Heterotetramer of two type I and two type II keratins. Keratin-4 is generally associated with keratin-13.</text>
</comment>
<comment type="interaction">
    <interactant intactId="EBI-2371606">
        <id>P19013</id>
    </interactant>
    <interactant intactId="EBI-725606">
        <id>Q9NWQ9</id>
        <label>C14orf119</label>
    </interactant>
    <organismsDiffer>false</organismsDiffer>
    <experiments>3</experiments>
</comment>
<comment type="interaction">
    <interactant intactId="EBI-2371606">
        <id>P19013</id>
    </interactant>
    <interactant intactId="EBI-10961624">
        <id>Q2TAC2-2</id>
        <label>CCDC57</label>
    </interactant>
    <organismsDiffer>false</organismsDiffer>
    <experiments>3</experiments>
</comment>
<comment type="interaction">
    <interactant intactId="EBI-2371606">
        <id>P19013</id>
    </interactant>
    <interactant intactId="EBI-11752486">
        <id>Q86XR8-3</id>
        <label>CEP57</label>
    </interactant>
    <organismsDiffer>false</organismsDiffer>
    <experiments>3</experiments>
</comment>
<comment type="interaction">
    <interactant intactId="EBI-2371606">
        <id>P19013</id>
    </interactant>
    <interactant intactId="EBI-10171552">
        <id>A1A4E9</id>
        <label>KRT13</label>
    </interactant>
    <organismsDiffer>false</organismsDiffer>
    <experiments>3</experiments>
</comment>
<comment type="interaction">
    <interactant intactId="EBI-2371606">
        <id>P19013</id>
    </interactant>
    <interactant intactId="EBI-1223876">
        <id>P13646</id>
        <label>KRT13</label>
    </interactant>
    <organismsDiffer>false</organismsDiffer>
    <experiments>4</experiments>
</comment>
<comment type="interaction">
    <interactant intactId="EBI-2371606">
        <id>P19013</id>
    </interactant>
    <interactant intactId="EBI-739566">
        <id>P19012</id>
        <label>KRT15</label>
    </interactant>
    <organismsDiffer>false</organismsDiffer>
    <experiments>6</experiments>
</comment>
<comment type="interaction">
    <interactant intactId="EBI-2371606">
        <id>P19013</id>
    </interactant>
    <interactant intactId="EBI-356410">
        <id>P08779</id>
        <label>KRT16</label>
    </interactant>
    <organismsDiffer>false</organismsDiffer>
    <experiments>3</experiments>
</comment>
<comment type="interaction">
    <interactant intactId="EBI-2371606">
        <id>P19013</id>
    </interactant>
    <interactant intactId="EBI-742756">
        <id>P08727</id>
        <label>KRT19</label>
    </interactant>
    <organismsDiffer>false</organismsDiffer>
    <experiments>3</experiments>
</comment>
<comment type="interaction">
    <interactant intactId="EBI-2371606">
        <id>P19013</id>
    </interactant>
    <interactant intactId="EBI-2952736">
        <id>Q2M2I5</id>
        <label>KRT24</label>
    </interactant>
    <organismsDiffer>false</organismsDiffer>
    <experiments>3</experiments>
</comment>
<comment type="interaction">
    <interactant intactId="EBI-2371606">
        <id>P19013</id>
    </interactant>
    <interactant intactId="EBI-11980019">
        <id>Q7Z3Z0</id>
        <label>KRT25</label>
    </interactant>
    <organismsDiffer>false</organismsDiffer>
    <experiments>3</experiments>
</comment>
<comment type="interaction">
    <interactant intactId="EBI-2371606">
        <id>P19013</id>
    </interactant>
    <interactant intactId="EBI-3044087">
        <id>Q7Z3Y8</id>
        <label>KRT27</label>
    </interactant>
    <organismsDiffer>false</organismsDiffer>
    <experiments>3</experiments>
</comment>
<comment type="interaction">
    <interactant intactId="EBI-2371606">
        <id>P19013</id>
    </interactant>
    <interactant intactId="EBI-11980489">
        <id>Q7Z3Y7</id>
        <label>KRT28</label>
    </interactant>
    <organismsDiffer>false</organismsDiffer>
    <experiments>3</experiments>
</comment>
<comment type="interaction">
    <interactant intactId="EBI-2371606">
        <id>P19013</id>
    </interactant>
    <interactant intactId="EBI-948001">
        <id>Q15323</id>
        <label>KRT31</label>
    </interactant>
    <organismsDiffer>false</organismsDiffer>
    <experiments>3</experiments>
</comment>
<comment type="interaction">
    <interactant intactId="EBI-2371606">
        <id>P19013</id>
    </interactant>
    <interactant intactId="EBI-1049638">
        <id>Q14525</id>
        <label>KRT33B</label>
    </interactant>
    <organismsDiffer>false</organismsDiffer>
    <experiments>7</experiments>
</comment>
<comment type="interaction">
    <interactant intactId="EBI-2371606">
        <id>P19013</id>
    </interactant>
    <interactant intactId="EBI-1058674">
        <id>Q92764</id>
        <label>KRT35</label>
    </interactant>
    <organismsDiffer>false</organismsDiffer>
    <experiments>3</experiments>
</comment>
<comment type="interaction">
    <interactant intactId="EBI-2371606">
        <id>P19013</id>
    </interactant>
    <interactant intactId="EBI-11958506">
        <id>O76013-2</id>
        <label>KRT36</label>
    </interactant>
    <organismsDiffer>false</organismsDiffer>
    <experiments>5</experiments>
</comment>
<comment type="interaction">
    <interactant intactId="EBI-2371606">
        <id>P19013</id>
    </interactant>
    <interactant intactId="EBI-1045716">
        <id>O76014</id>
        <label>KRT37</label>
    </interactant>
    <organismsDiffer>false</organismsDiffer>
    <experiments>3</experiments>
</comment>
<comment type="interaction">
    <interactant intactId="EBI-2371606">
        <id>P19013</id>
    </interactant>
    <interactant intactId="EBI-1047263">
        <id>O76015</id>
        <label>KRT38</label>
    </interactant>
    <organismsDiffer>false</organismsDiffer>
    <experiments>9</experiments>
</comment>
<comment type="interaction">
    <interactant intactId="EBI-2371606">
        <id>P19013</id>
    </interactant>
    <interactant intactId="EBI-10171697">
        <id>Q6A162</id>
        <label>KRT40</label>
    </interactant>
    <organismsDiffer>false</organismsDiffer>
    <experiments>7</experiments>
</comment>
<comment type="interaction">
    <interactant intactId="EBI-2371606">
        <id>P19013</id>
    </interactant>
    <interactant intactId="EBI-521611">
        <id>Q14980</id>
        <label>NUMA1</label>
    </interactant>
    <organismsDiffer>false</organismsDiffer>
    <experiments>2</experiments>
</comment>
<comment type="interaction">
    <interactant intactId="EBI-2371606">
        <id>P19013</id>
    </interactant>
    <interactant intactId="EBI-1105153">
        <id>Q96KQ4</id>
        <label>PPP1R13B</label>
    </interactant>
    <organismsDiffer>false</organismsDiffer>
    <experiments>3</experiments>
</comment>
<comment type="interaction">
    <interactant intactId="EBI-2371606">
        <id>P19013</id>
    </interactant>
    <interactant intactId="EBI-2130429">
        <id>Q9BYV2</id>
        <label>TRIM54</label>
    </interactant>
    <organismsDiffer>false</organismsDiffer>
    <experiments>4</experiments>
</comment>
<comment type="interaction">
    <interactant intactId="EBI-2371606">
        <id>P19013</id>
    </interactant>
    <interactant intactId="EBI-10964469">
        <id>Q9UGJ1-2</id>
        <label>TUBGCP4</label>
    </interactant>
    <organismsDiffer>false</organismsDiffer>
    <experiments>3</experiments>
</comment>
<comment type="interaction">
    <interactant intactId="EBI-2371606">
        <id>P19013</id>
    </interactant>
    <interactant intactId="EBI-9675698">
        <id>P14079</id>
        <label>tax</label>
    </interactant>
    <organismsDiffer>true</organismsDiffer>
    <experiments>3</experiments>
</comment>
<comment type="tissue specificity">
    <text evidence="6">Detected in the suprabasal layer of the stratified epithelium of the esophagus, exocervix, vagina, mouth and lingual mucosa, and in cells and cell clusters in the mucosa and serous gland ducts of the esophageal submucosa (at protein level). Expressed widely in the exocervix and esophageal epithelium, with lowest levels detected in the basal cell layer.</text>
</comment>
<comment type="polymorphism">
    <text evidence="7">Three alleles of K4 are known: K4A1, K4A2 and K4B (displayed here).</text>
</comment>
<comment type="disease" evidence="4 5">
    <disease id="DI-02420">
        <name>White sponge nevus 1</name>
        <acronym>WSN1</acronym>
        <description>A rare disorder characterized by the presence of soft, white, and spongy plaques in the oral mucosa. The characteristic histopathologic features are epithelial thickening, parakeratosis, and vacuolization of the suprabasal layer of oral epithelial keratinocytes. Less frequently the mucous membranes of the nose, esophagus, genitalia and rectum are involved.</description>
        <dbReference type="MIM" id="193900"/>
    </disease>
    <text>The disease is caused by variants affecting the gene represented in this entry.</text>
</comment>
<comment type="miscellaneous">
    <text>There are two types of cytoskeletal and microfibrillar keratin: I (acidic; 40-55 kDa) and II (neutral to basic; 56-70 kDa).</text>
</comment>
<comment type="similarity">
    <text evidence="2">Belongs to the intermediate filament family.</text>
</comment>
<name>K2C4_HUMAN</name>
<organism>
    <name type="scientific">Homo sapiens</name>
    <name type="common">Human</name>
    <dbReference type="NCBI Taxonomy" id="9606"/>
    <lineage>
        <taxon>Eukaryota</taxon>
        <taxon>Metazoa</taxon>
        <taxon>Chordata</taxon>
        <taxon>Craniata</taxon>
        <taxon>Vertebrata</taxon>
        <taxon>Euteleostomi</taxon>
        <taxon>Mammalia</taxon>
        <taxon>Eutheria</taxon>
        <taxon>Euarchontoglires</taxon>
        <taxon>Primates</taxon>
        <taxon>Haplorrhini</taxon>
        <taxon>Catarrhini</taxon>
        <taxon>Hominidae</taxon>
        <taxon>Homo</taxon>
    </lineage>
</organism>
<keyword id="KW-0175">Coiled coil</keyword>
<keyword id="KW-0225">Disease variant</keyword>
<keyword id="KW-0403">Intermediate filament</keyword>
<keyword id="KW-0416">Keratin</keyword>
<keyword id="KW-0488">Methylation</keyword>
<keyword id="KW-1267">Proteomics identification</keyword>
<keyword id="KW-1185">Reference proteome</keyword>
<reference key="1">
    <citation type="submission" date="2001-07" db="EMBL/GenBank/DDBJ databases">
        <title>A mutation detection strategy for oral mucosal keratins K4, K13, and K2p in white sponge nevus.</title>
        <authorList>
            <person name="Cassidy A.J."/>
            <person name="Morley S.M."/>
            <person name="McLean W.H.I."/>
        </authorList>
    </citation>
    <scope>NUCLEOTIDE SEQUENCE [GENOMIC DNA]</scope>
</reference>
<reference key="2">
    <citation type="journal article" date="2004" name="Nat. Genet.">
        <title>Complete sequencing and characterization of 21,243 full-length human cDNAs.</title>
        <authorList>
            <person name="Ota T."/>
            <person name="Suzuki Y."/>
            <person name="Nishikawa T."/>
            <person name="Otsuki T."/>
            <person name="Sugiyama T."/>
            <person name="Irie R."/>
            <person name="Wakamatsu A."/>
            <person name="Hayashi K."/>
            <person name="Sato H."/>
            <person name="Nagai K."/>
            <person name="Kimura K."/>
            <person name="Makita H."/>
            <person name="Sekine M."/>
            <person name="Obayashi M."/>
            <person name="Nishi T."/>
            <person name="Shibahara T."/>
            <person name="Tanaka T."/>
            <person name="Ishii S."/>
            <person name="Yamamoto J."/>
            <person name="Saito K."/>
            <person name="Kawai Y."/>
            <person name="Isono Y."/>
            <person name="Nakamura Y."/>
            <person name="Nagahari K."/>
            <person name="Murakami K."/>
            <person name="Yasuda T."/>
            <person name="Iwayanagi T."/>
            <person name="Wagatsuma M."/>
            <person name="Shiratori A."/>
            <person name="Sudo H."/>
            <person name="Hosoiri T."/>
            <person name="Kaku Y."/>
            <person name="Kodaira H."/>
            <person name="Kondo H."/>
            <person name="Sugawara M."/>
            <person name="Takahashi M."/>
            <person name="Kanda K."/>
            <person name="Yokoi T."/>
            <person name="Furuya T."/>
            <person name="Kikkawa E."/>
            <person name="Omura Y."/>
            <person name="Abe K."/>
            <person name="Kamihara K."/>
            <person name="Katsuta N."/>
            <person name="Sato K."/>
            <person name="Tanikawa M."/>
            <person name="Yamazaki M."/>
            <person name="Ninomiya K."/>
            <person name="Ishibashi T."/>
            <person name="Yamashita H."/>
            <person name="Murakawa K."/>
            <person name="Fujimori K."/>
            <person name="Tanai H."/>
            <person name="Kimata M."/>
            <person name="Watanabe M."/>
            <person name="Hiraoka S."/>
            <person name="Chiba Y."/>
            <person name="Ishida S."/>
            <person name="Ono Y."/>
            <person name="Takiguchi S."/>
            <person name="Watanabe S."/>
            <person name="Yosida M."/>
            <person name="Hotuta T."/>
            <person name="Kusano J."/>
            <person name="Kanehori K."/>
            <person name="Takahashi-Fujii A."/>
            <person name="Hara H."/>
            <person name="Tanase T.-O."/>
            <person name="Nomura Y."/>
            <person name="Togiya S."/>
            <person name="Komai F."/>
            <person name="Hara R."/>
            <person name="Takeuchi K."/>
            <person name="Arita M."/>
            <person name="Imose N."/>
            <person name="Musashino K."/>
            <person name="Yuuki H."/>
            <person name="Oshima A."/>
            <person name="Sasaki N."/>
            <person name="Aotsuka S."/>
            <person name="Yoshikawa Y."/>
            <person name="Matsunawa H."/>
            <person name="Ichihara T."/>
            <person name="Shiohata N."/>
            <person name="Sano S."/>
            <person name="Moriya S."/>
            <person name="Momiyama H."/>
            <person name="Satoh N."/>
            <person name="Takami S."/>
            <person name="Terashima Y."/>
            <person name="Suzuki O."/>
            <person name="Nakagawa S."/>
            <person name="Senoh A."/>
            <person name="Mizoguchi H."/>
            <person name="Goto Y."/>
            <person name="Shimizu F."/>
            <person name="Wakebe H."/>
            <person name="Hishigaki H."/>
            <person name="Watanabe T."/>
            <person name="Sugiyama A."/>
            <person name="Takemoto M."/>
            <person name="Kawakami B."/>
            <person name="Yamazaki M."/>
            <person name="Watanabe K."/>
            <person name="Kumagai A."/>
            <person name="Itakura S."/>
            <person name="Fukuzumi Y."/>
            <person name="Fujimori Y."/>
            <person name="Komiyama M."/>
            <person name="Tashiro H."/>
            <person name="Tanigami A."/>
            <person name="Fujiwara T."/>
            <person name="Ono T."/>
            <person name="Yamada K."/>
            <person name="Fujii Y."/>
            <person name="Ozaki K."/>
            <person name="Hirao M."/>
            <person name="Ohmori Y."/>
            <person name="Kawabata A."/>
            <person name="Hikiji T."/>
            <person name="Kobatake N."/>
            <person name="Inagaki H."/>
            <person name="Ikema Y."/>
            <person name="Okamoto S."/>
            <person name="Okitani R."/>
            <person name="Kawakami T."/>
            <person name="Noguchi S."/>
            <person name="Itoh T."/>
            <person name="Shigeta K."/>
            <person name="Senba T."/>
            <person name="Matsumura K."/>
            <person name="Nakajima Y."/>
            <person name="Mizuno T."/>
            <person name="Morinaga M."/>
            <person name="Sasaki M."/>
            <person name="Togashi T."/>
            <person name="Oyama M."/>
            <person name="Hata H."/>
            <person name="Watanabe M."/>
            <person name="Komatsu T."/>
            <person name="Mizushima-Sugano J."/>
            <person name="Satoh T."/>
            <person name="Shirai Y."/>
            <person name="Takahashi Y."/>
            <person name="Nakagawa K."/>
            <person name="Okumura K."/>
            <person name="Nagase T."/>
            <person name="Nomura N."/>
            <person name="Kikuchi H."/>
            <person name="Masuho Y."/>
            <person name="Yamashita R."/>
            <person name="Nakai K."/>
            <person name="Yada T."/>
            <person name="Nakamura Y."/>
            <person name="Ohara O."/>
            <person name="Isogai T."/>
            <person name="Sugano S."/>
        </authorList>
    </citation>
    <scope>NUCLEOTIDE SEQUENCE [LARGE SCALE MRNA]</scope>
    <source>
        <tissue>Tongue</tissue>
    </source>
</reference>
<reference key="3">
    <citation type="journal article" date="2006" name="Nature">
        <title>The finished DNA sequence of human chromosome 12.</title>
        <authorList>
            <person name="Scherer S.E."/>
            <person name="Muzny D.M."/>
            <person name="Buhay C.J."/>
            <person name="Chen R."/>
            <person name="Cree A."/>
            <person name="Ding Y."/>
            <person name="Dugan-Rocha S."/>
            <person name="Gill R."/>
            <person name="Gunaratne P."/>
            <person name="Harris R.A."/>
            <person name="Hawes A.C."/>
            <person name="Hernandez J."/>
            <person name="Hodgson A.V."/>
            <person name="Hume J."/>
            <person name="Jackson A."/>
            <person name="Khan Z.M."/>
            <person name="Kovar-Smith C."/>
            <person name="Lewis L.R."/>
            <person name="Lozado R.J."/>
            <person name="Metzker M.L."/>
            <person name="Milosavljevic A."/>
            <person name="Miner G.R."/>
            <person name="Montgomery K.T."/>
            <person name="Morgan M.B."/>
            <person name="Nazareth L.V."/>
            <person name="Scott G."/>
            <person name="Sodergren E."/>
            <person name="Song X.-Z."/>
            <person name="Steffen D."/>
            <person name="Lovering R.C."/>
            <person name="Wheeler D.A."/>
            <person name="Worley K.C."/>
            <person name="Yuan Y."/>
            <person name="Zhang Z."/>
            <person name="Adams C.Q."/>
            <person name="Ansari-Lari M.A."/>
            <person name="Ayele M."/>
            <person name="Brown M.J."/>
            <person name="Chen G."/>
            <person name="Chen Z."/>
            <person name="Clerc-Blankenburg K.P."/>
            <person name="Davis C."/>
            <person name="Delgado O."/>
            <person name="Dinh H.H."/>
            <person name="Draper H."/>
            <person name="Gonzalez-Garay M.L."/>
            <person name="Havlak P."/>
            <person name="Jackson L.R."/>
            <person name="Jacob L.S."/>
            <person name="Kelly S.H."/>
            <person name="Li L."/>
            <person name="Li Z."/>
            <person name="Liu J."/>
            <person name="Liu W."/>
            <person name="Lu J."/>
            <person name="Maheshwari M."/>
            <person name="Nguyen B.-V."/>
            <person name="Okwuonu G.O."/>
            <person name="Pasternak S."/>
            <person name="Perez L.M."/>
            <person name="Plopper F.J.H."/>
            <person name="Santibanez J."/>
            <person name="Shen H."/>
            <person name="Tabor P.E."/>
            <person name="Verduzco D."/>
            <person name="Waldron L."/>
            <person name="Wang Q."/>
            <person name="Williams G.A."/>
            <person name="Zhang J."/>
            <person name="Zhou J."/>
            <person name="Allen C.C."/>
            <person name="Amin A.G."/>
            <person name="Anyalebechi V."/>
            <person name="Bailey M."/>
            <person name="Barbaria J.A."/>
            <person name="Bimage K.E."/>
            <person name="Bryant N.P."/>
            <person name="Burch P.E."/>
            <person name="Burkett C.E."/>
            <person name="Burrell K.L."/>
            <person name="Calderon E."/>
            <person name="Cardenas V."/>
            <person name="Carter K."/>
            <person name="Casias K."/>
            <person name="Cavazos I."/>
            <person name="Cavazos S.R."/>
            <person name="Ceasar H."/>
            <person name="Chacko J."/>
            <person name="Chan S.N."/>
            <person name="Chavez D."/>
            <person name="Christopoulos C."/>
            <person name="Chu J."/>
            <person name="Cockrell R."/>
            <person name="Cox C.D."/>
            <person name="Dang M."/>
            <person name="Dathorne S.R."/>
            <person name="David R."/>
            <person name="Davis C.M."/>
            <person name="Davy-Carroll L."/>
            <person name="Deshazo D.R."/>
            <person name="Donlin J.E."/>
            <person name="D'Souza L."/>
            <person name="Eaves K.A."/>
            <person name="Egan A."/>
            <person name="Emery-Cohen A.J."/>
            <person name="Escotto M."/>
            <person name="Flagg N."/>
            <person name="Forbes L.D."/>
            <person name="Gabisi A.M."/>
            <person name="Garza M."/>
            <person name="Hamilton C."/>
            <person name="Henderson N."/>
            <person name="Hernandez O."/>
            <person name="Hines S."/>
            <person name="Hogues M.E."/>
            <person name="Huang M."/>
            <person name="Idlebird D.G."/>
            <person name="Johnson R."/>
            <person name="Jolivet A."/>
            <person name="Jones S."/>
            <person name="Kagan R."/>
            <person name="King L.M."/>
            <person name="Leal B."/>
            <person name="Lebow H."/>
            <person name="Lee S."/>
            <person name="LeVan J.M."/>
            <person name="Lewis L.C."/>
            <person name="London P."/>
            <person name="Lorensuhewa L.M."/>
            <person name="Loulseged H."/>
            <person name="Lovett D.A."/>
            <person name="Lucier A."/>
            <person name="Lucier R.L."/>
            <person name="Ma J."/>
            <person name="Madu R.C."/>
            <person name="Mapua P."/>
            <person name="Martindale A.D."/>
            <person name="Martinez E."/>
            <person name="Massey E."/>
            <person name="Mawhiney S."/>
            <person name="Meador M.G."/>
            <person name="Mendez S."/>
            <person name="Mercado C."/>
            <person name="Mercado I.C."/>
            <person name="Merritt C.E."/>
            <person name="Miner Z.L."/>
            <person name="Minja E."/>
            <person name="Mitchell T."/>
            <person name="Mohabbat F."/>
            <person name="Mohabbat K."/>
            <person name="Montgomery B."/>
            <person name="Moore N."/>
            <person name="Morris S."/>
            <person name="Munidasa M."/>
            <person name="Ngo R.N."/>
            <person name="Nguyen N.B."/>
            <person name="Nickerson E."/>
            <person name="Nwaokelemeh O.O."/>
            <person name="Nwokenkwo S."/>
            <person name="Obregon M."/>
            <person name="Oguh M."/>
            <person name="Oragunye N."/>
            <person name="Oviedo R.J."/>
            <person name="Parish B.J."/>
            <person name="Parker D.N."/>
            <person name="Parrish J."/>
            <person name="Parks K.L."/>
            <person name="Paul H.A."/>
            <person name="Payton B.A."/>
            <person name="Perez A."/>
            <person name="Perrin W."/>
            <person name="Pickens A."/>
            <person name="Primus E.L."/>
            <person name="Pu L.-L."/>
            <person name="Puazo M."/>
            <person name="Quiles M.M."/>
            <person name="Quiroz J.B."/>
            <person name="Rabata D."/>
            <person name="Reeves K."/>
            <person name="Ruiz S.J."/>
            <person name="Shao H."/>
            <person name="Sisson I."/>
            <person name="Sonaike T."/>
            <person name="Sorelle R.P."/>
            <person name="Sutton A.E."/>
            <person name="Svatek A.F."/>
            <person name="Svetz L.A."/>
            <person name="Tamerisa K.S."/>
            <person name="Taylor T.R."/>
            <person name="Teague B."/>
            <person name="Thomas N."/>
            <person name="Thorn R.D."/>
            <person name="Trejos Z.Y."/>
            <person name="Trevino B.K."/>
            <person name="Ukegbu O.N."/>
            <person name="Urban J.B."/>
            <person name="Vasquez L.I."/>
            <person name="Vera V.A."/>
            <person name="Villasana D.M."/>
            <person name="Wang L."/>
            <person name="Ward-Moore S."/>
            <person name="Warren J.T."/>
            <person name="Wei X."/>
            <person name="White F."/>
            <person name="Williamson A.L."/>
            <person name="Wleczyk R."/>
            <person name="Wooden H.S."/>
            <person name="Wooden S.H."/>
            <person name="Yen J."/>
            <person name="Yoon L."/>
            <person name="Yoon V."/>
            <person name="Zorrilla S.E."/>
            <person name="Nelson D."/>
            <person name="Kucherlapati R."/>
            <person name="Weinstock G."/>
            <person name="Gibbs R.A."/>
        </authorList>
    </citation>
    <scope>NUCLEOTIDE SEQUENCE [LARGE SCALE GENOMIC DNA]</scope>
    <scope>VARIANT 83-GLY--THR-96 DEL</scope>
</reference>
<reference key="4">
    <citation type="journal article" date="2004" name="Genome Res.">
        <title>The status, quality, and expansion of the NIH full-length cDNA project: the Mammalian Gene Collection (MGC).</title>
        <authorList>
            <consortium name="The MGC Project Team"/>
        </authorList>
    </citation>
    <scope>NUCLEOTIDE SEQUENCE [LARGE SCALE MRNA]</scope>
    <source>
        <tissue>Brain</tissue>
        <tissue>Ovary</tissue>
    </source>
</reference>
<reference key="5">
    <citation type="journal article" date="1993" name="J. Invest. Dermatol.">
        <title>Allelic variations of human keratins K4 and K5 provide polymorphic markers within the type II keratin gene cluster on chromosome 12.</title>
        <authorList>
            <person name="Wanner R."/>
            <person name="Foerster H.-H."/>
            <person name="Tilmans I."/>
            <person name="Mischke D."/>
        </authorList>
    </citation>
    <scope>NUCLEOTIDE SEQUENCE [MRNA] OF 1-144</scope>
    <scope>VARIANTS VAL-72 AND GLY-GLY-PHE-GLY-ALA-GLY-GLY-PHE-GLY-ALA-GLY-PHE-GLY-THR-82 INS</scope>
</reference>
<reference key="6">
    <citation type="journal article" date="1988" name="J. Cell Biol.">
        <title>Molecular characterization and expression of the stratification-related cytokeratins 4 and 15.</title>
        <authorList>
            <person name="Leube R.E."/>
            <person name="Bader B.L."/>
            <person name="Bosch F.X."/>
            <person name="Zimbelmann R."/>
            <person name="Achtstaetter T."/>
            <person name="Franke W.W."/>
        </authorList>
    </citation>
    <scope>NUCLEOTIDE SEQUENCE [MRNA] OF 113-520</scope>
    <scope>TISSUE SPECIFICITY</scope>
</reference>
<reference key="7">
    <citation type="submission" date="1991-07" db="EMBL/GenBank/DDBJ databases">
        <authorList>
            <person name="Wanner R."/>
            <person name="Tilmans I."/>
            <person name="Mischke D."/>
        </authorList>
    </citation>
    <scope>NUCLEOTIDE SEQUENCE [GENOMIC DNA] OF 397-520</scope>
</reference>
<reference key="8">
    <citation type="journal article" date="2011" name="BMC Syst. Biol.">
        <title>Initial characterization of the human central proteome.</title>
        <authorList>
            <person name="Burkard T.R."/>
            <person name="Planyavsky M."/>
            <person name="Kaupe I."/>
            <person name="Breitwieser F.P."/>
            <person name="Buerckstuemmer T."/>
            <person name="Bennett K.L."/>
            <person name="Superti-Furga G."/>
            <person name="Colinge J."/>
        </authorList>
    </citation>
    <scope>IDENTIFICATION BY MASS SPECTROMETRY [LARGE SCALE ANALYSIS]</scope>
</reference>
<reference key="9">
    <citation type="journal article" date="2000" name="J. Invest. Dermatol.">
        <title>A glutamine insertion in the 1A alpha helical domain of the keratin 4 gene in a familial case of white sponge nevus.</title>
        <authorList>
            <person name="Terrinoni A."/>
            <person name="Candi E."/>
            <person name="Oddi S."/>
            <person name="Gobello T."/>
            <person name="Camaione D.B."/>
            <person name="Mazzanti C."/>
            <person name="Zambruno G."/>
            <person name="Knight R."/>
            <person name="Melino G."/>
        </authorList>
    </citation>
    <scope>VARIANT WSN1 GLN-139 INS</scope>
</reference>
<reference key="10">
    <citation type="journal article" date="2003" name="Br. J. Dermatol.">
        <title>A novel mutation in the keratin 4 gene causing white sponge naevus.</title>
        <authorList>
            <person name="Chao S.C."/>
            <person name="Tsai Y.M."/>
            <person name="Yang M.H."/>
            <person name="Lee Jy J.Y."/>
        </authorList>
    </citation>
    <scope>VARIANT WSN1 LYS-435</scope>
</reference>
<evidence type="ECO:0000250" key="1">
    <source>
        <dbReference type="UniProtKB" id="P07744"/>
    </source>
</evidence>
<evidence type="ECO:0000255" key="2">
    <source>
        <dbReference type="PROSITE-ProRule" id="PRU01188"/>
    </source>
</evidence>
<evidence type="ECO:0000256" key="3">
    <source>
        <dbReference type="SAM" id="MobiDB-lite"/>
    </source>
</evidence>
<evidence type="ECO:0000269" key="4">
    <source>
    </source>
</evidence>
<evidence type="ECO:0000269" key="5">
    <source>
    </source>
</evidence>
<evidence type="ECO:0000269" key="6">
    <source>
    </source>
</evidence>
<evidence type="ECO:0000269" key="7">
    <source>
    </source>
</evidence>
<evidence type="ECO:0000305" key="8"/>
<feature type="chain" id="PRO_0000063722" description="Keratin, type II cytoskeletal 4">
    <location>
        <begin position="1"/>
        <end position="520"/>
    </location>
</feature>
<feature type="domain" description="IF rod" evidence="2">
    <location>
        <begin position="137"/>
        <end position="450"/>
    </location>
</feature>
<feature type="region of interest" description="Head">
    <location>
        <begin position="1"/>
        <end position="136"/>
    </location>
</feature>
<feature type="region of interest" description="Coil 1A">
    <location>
        <begin position="137"/>
        <end position="172"/>
    </location>
</feature>
<feature type="region of interest" description="Linker 1">
    <location>
        <begin position="173"/>
        <end position="191"/>
    </location>
</feature>
<feature type="region of interest" description="Coil 1B">
    <location>
        <begin position="192"/>
        <end position="284"/>
    </location>
</feature>
<feature type="region of interest" description="Linker 12">
    <location>
        <begin position="285"/>
        <end position="307"/>
    </location>
</feature>
<feature type="region of interest" description="Coil 2">
    <location>
        <begin position="308"/>
        <end position="447"/>
    </location>
</feature>
<feature type="region of interest" description="Tail">
    <location>
        <begin position="448"/>
        <end position="520"/>
    </location>
</feature>
<feature type="region of interest" description="Disordered" evidence="3">
    <location>
        <begin position="500"/>
        <end position="520"/>
    </location>
</feature>
<feature type="compositionally biased region" description="Low complexity" evidence="3">
    <location>
        <begin position="503"/>
        <end position="514"/>
    </location>
</feature>
<feature type="site" description="Stutter">
    <location>
        <position position="388"/>
    </location>
</feature>
<feature type="modified residue" description="Omega-N-methylarginine" evidence="1">
    <location>
        <position position="13"/>
    </location>
</feature>
<feature type="sequence variant" id="VAR_003869" description="In allele K4A1; dbSNP:rs2638525." evidence="7">
    <original>A</original>
    <variation>V</variation>
    <location>
        <position position="72"/>
    </location>
</feature>
<feature type="sequence variant" id="VAR_083057" description="In alleles K4A1 and K4A2." evidence="7">
    <original>T</original>
    <variation>TGGFGAGGFGAGFGT</variation>
    <location>
        <position position="82"/>
    </location>
</feature>
<feature type="sequence variant" id="VAR_012845" description="In WSN1." evidence="4">
    <original>E</original>
    <variation>EQ</variation>
    <location>
        <position position="139"/>
    </location>
</feature>
<feature type="sequence variant" id="VAR_016038" description="In WSN1; dbSNP:rs62642055." evidence="5">
    <original>E</original>
    <variation>K</variation>
    <location>
        <position position="435"/>
    </location>
</feature>
<feature type="sequence conflict" description="In Ref. 2; BAG61384." evidence="8" ref="2">
    <original>S</original>
    <variation>L</variation>
    <location>
        <position position="68"/>
    </location>
</feature>
<feature type="sequence conflict" description="In Ref. 2; BAG61384." evidence="8" ref="2">
    <original>G</original>
    <variation>D</variation>
    <location>
        <position position="91"/>
    </location>
</feature>
<feature type="sequence conflict" description="In Ref. 5; CAA47914." evidence="8" ref="5">
    <original>C</original>
    <variation>L</variation>
    <location>
        <position position="104"/>
    </location>
</feature>
<feature type="sequence conflict" description="In Ref. 6; CAA30534." evidence="8" ref="6">
    <original>TI</original>
    <variation>SL</variation>
    <location>
        <begin position="113"/>
        <end position="114"/>
    </location>
</feature>
<feature type="sequence conflict" description="In Ref. 4; AAH03630." evidence="8" ref="4">
    <original>D</original>
    <variation>Y</variation>
    <location>
        <position position="222"/>
    </location>
</feature>